<name>FABZ_SALA4</name>
<reference key="1">
    <citation type="journal article" date="2011" name="J. Bacteriol.">
        <title>Comparative genomics of 28 Salmonella enterica isolates: evidence for CRISPR-mediated adaptive sublineage evolution.</title>
        <authorList>
            <person name="Fricke W.F."/>
            <person name="Mammel M.K."/>
            <person name="McDermott P.F."/>
            <person name="Tartera C."/>
            <person name="White D.G."/>
            <person name="Leclerc J.E."/>
            <person name="Ravel J."/>
            <person name="Cebula T.A."/>
        </authorList>
    </citation>
    <scope>NUCLEOTIDE SEQUENCE [LARGE SCALE GENOMIC DNA]</scope>
    <source>
        <strain>SL483</strain>
    </source>
</reference>
<evidence type="ECO:0000255" key="1">
    <source>
        <dbReference type="HAMAP-Rule" id="MF_00406"/>
    </source>
</evidence>
<keyword id="KW-0963">Cytoplasm</keyword>
<keyword id="KW-0441">Lipid A biosynthesis</keyword>
<keyword id="KW-0444">Lipid biosynthesis</keyword>
<keyword id="KW-0443">Lipid metabolism</keyword>
<keyword id="KW-0456">Lyase</keyword>
<proteinExistence type="inferred from homology"/>
<sequence>MTTNTHTLQIEEILELLPHRFPFLLVDRVLDFEEGRFLRAVKNVSVNEPFFQGHFPGKPILPGVLILEAMAQATGILAFKSVGKLEPGELYYFAGIDEARFKRPVVPGDQMIMEVTFEKTRRGLTRFKGVALVDGKVVCEATMMCARSREA</sequence>
<feature type="chain" id="PRO_1000123658" description="3-hydroxyacyl-[acyl-carrier-protein] dehydratase FabZ">
    <location>
        <begin position="1"/>
        <end position="151"/>
    </location>
</feature>
<feature type="active site" evidence="1">
    <location>
        <position position="54"/>
    </location>
</feature>
<dbReference type="EC" id="4.2.1.59" evidence="1"/>
<dbReference type="EMBL" id="CP001138">
    <property type="protein sequence ID" value="ACH49428.1"/>
    <property type="molecule type" value="Genomic_DNA"/>
</dbReference>
<dbReference type="RefSeq" id="WP_000210741.1">
    <property type="nucleotide sequence ID" value="NC_011149.1"/>
</dbReference>
<dbReference type="SMR" id="B5F8U1"/>
<dbReference type="GeneID" id="66754751"/>
<dbReference type="KEGG" id="sea:SeAg_B0268"/>
<dbReference type="HOGENOM" id="CLU_078912_1_0_6"/>
<dbReference type="Proteomes" id="UP000008819">
    <property type="component" value="Chromosome"/>
</dbReference>
<dbReference type="GO" id="GO:0005737">
    <property type="term" value="C:cytoplasm"/>
    <property type="evidence" value="ECO:0007669"/>
    <property type="project" value="UniProtKB-SubCell"/>
</dbReference>
<dbReference type="GO" id="GO:0016020">
    <property type="term" value="C:membrane"/>
    <property type="evidence" value="ECO:0007669"/>
    <property type="project" value="GOC"/>
</dbReference>
<dbReference type="GO" id="GO:0019171">
    <property type="term" value="F:(3R)-hydroxyacyl-[acyl-carrier-protein] dehydratase activity"/>
    <property type="evidence" value="ECO:0007669"/>
    <property type="project" value="UniProtKB-EC"/>
</dbReference>
<dbReference type="GO" id="GO:0006633">
    <property type="term" value="P:fatty acid biosynthetic process"/>
    <property type="evidence" value="ECO:0007669"/>
    <property type="project" value="UniProtKB-UniRule"/>
</dbReference>
<dbReference type="GO" id="GO:0009245">
    <property type="term" value="P:lipid A biosynthetic process"/>
    <property type="evidence" value="ECO:0007669"/>
    <property type="project" value="UniProtKB-UniRule"/>
</dbReference>
<dbReference type="CDD" id="cd01288">
    <property type="entry name" value="FabZ"/>
    <property type="match status" value="1"/>
</dbReference>
<dbReference type="FunFam" id="3.10.129.10:FF:000001">
    <property type="entry name" value="3-hydroxyacyl-[acyl-carrier-protein] dehydratase FabZ"/>
    <property type="match status" value="1"/>
</dbReference>
<dbReference type="Gene3D" id="3.10.129.10">
    <property type="entry name" value="Hotdog Thioesterase"/>
    <property type="match status" value="1"/>
</dbReference>
<dbReference type="HAMAP" id="MF_00406">
    <property type="entry name" value="FabZ"/>
    <property type="match status" value="1"/>
</dbReference>
<dbReference type="InterPro" id="IPR013114">
    <property type="entry name" value="FabA_FabZ"/>
</dbReference>
<dbReference type="InterPro" id="IPR010084">
    <property type="entry name" value="FabZ"/>
</dbReference>
<dbReference type="InterPro" id="IPR029069">
    <property type="entry name" value="HotDog_dom_sf"/>
</dbReference>
<dbReference type="NCBIfam" id="TIGR01750">
    <property type="entry name" value="fabZ"/>
    <property type="match status" value="1"/>
</dbReference>
<dbReference type="NCBIfam" id="NF000582">
    <property type="entry name" value="PRK00006.1"/>
    <property type="match status" value="1"/>
</dbReference>
<dbReference type="PANTHER" id="PTHR30272">
    <property type="entry name" value="3-HYDROXYACYL-[ACYL-CARRIER-PROTEIN] DEHYDRATASE"/>
    <property type="match status" value="1"/>
</dbReference>
<dbReference type="PANTHER" id="PTHR30272:SF1">
    <property type="entry name" value="3-HYDROXYACYL-[ACYL-CARRIER-PROTEIN] DEHYDRATASE"/>
    <property type="match status" value="1"/>
</dbReference>
<dbReference type="Pfam" id="PF07977">
    <property type="entry name" value="FabA"/>
    <property type="match status" value="1"/>
</dbReference>
<dbReference type="SUPFAM" id="SSF54637">
    <property type="entry name" value="Thioesterase/thiol ester dehydrase-isomerase"/>
    <property type="match status" value="1"/>
</dbReference>
<gene>
    <name evidence="1" type="primary">fabZ</name>
    <name type="ordered locus">SeAg_B0268</name>
</gene>
<organism>
    <name type="scientific">Salmonella agona (strain SL483)</name>
    <dbReference type="NCBI Taxonomy" id="454166"/>
    <lineage>
        <taxon>Bacteria</taxon>
        <taxon>Pseudomonadati</taxon>
        <taxon>Pseudomonadota</taxon>
        <taxon>Gammaproteobacteria</taxon>
        <taxon>Enterobacterales</taxon>
        <taxon>Enterobacteriaceae</taxon>
        <taxon>Salmonella</taxon>
    </lineage>
</organism>
<accession>B5F8U1</accession>
<protein>
    <recommendedName>
        <fullName evidence="1">3-hydroxyacyl-[acyl-carrier-protein] dehydratase FabZ</fullName>
        <ecNumber evidence="1">4.2.1.59</ecNumber>
    </recommendedName>
    <alternativeName>
        <fullName evidence="1">(3R)-hydroxymyristoyl-[acyl-carrier-protein] dehydratase</fullName>
        <shortName evidence="1">(3R)-hydroxymyristoyl-ACP dehydrase</shortName>
    </alternativeName>
    <alternativeName>
        <fullName evidence="1">Beta-hydroxyacyl-ACP dehydratase</fullName>
    </alternativeName>
</protein>
<comment type="function">
    <text evidence="1">Involved in unsaturated fatty acids biosynthesis. Catalyzes the dehydration of short chain beta-hydroxyacyl-ACPs and long chain saturated and unsaturated beta-hydroxyacyl-ACPs.</text>
</comment>
<comment type="catalytic activity">
    <reaction evidence="1">
        <text>a (3R)-hydroxyacyl-[ACP] = a (2E)-enoyl-[ACP] + H2O</text>
        <dbReference type="Rhea" id="RHEA:13097"/>
        <dbReference type="Rhea" id="RHEA-COMP:9925"/>
        <dbReference type="Rhea" id="RHEA-COMP:9945"/>
        <dbReference type="ChEBI" id="CHEBI:15377"/>
        <dbReference type="ChEBI" id="CHEBI:78784"/>
        <dbReference type="ChEBI" id="CHEBI:78827"/>
        <dbReference type="EC" id="4.2.1.59"/>
    </reaction>
</comment>
<comment type="subcellular location">
    <subcellularLocation>
        <location evidence="1">Cytoplasm</location>
    </subcellularLocation>
</comment>
<comment type="similarity">
    <text evidence="1">Belongs to the thioester dehydratase family. FabZ subfamily.</text>
</comment>